<evidence type="ECO:0000255" key="1">
    <source>
        <dbReference type="HAMAP-Rule" id="MF_00222"/>
    </source>
</evidence>
<sequence length="289" mass="30553">MDDKSMARGRKAFFTGFPIRHSRSPLIHGFWLKEQGIDGSYEAVEVKPEDFSSFAASLAANGFAGGNVTIPHKEAAYAAAESLDEAARAIGAVNTLWLENGRLCGGNTDAYGFAANLDASAPGWDKADRALVLGAGGASRAVVHALLSRGVCHVSVVNRTLSRAEELAAHFGARVYAHGWDEAQALVSNAGLIVNTTALGMSGHGEGQDFPIDLTCAPKEAVATDIVYVPLRTAFLNKAEKAGLKTVDGLGMLLHQAVPGFERWFGQRPQVTQALREHILADMAKAGAL</sequence>
<name>AROE_BRUO2</name>
<gene>
    <name evidence="1" type="primary">aroE</name>
    <name type="ordered locus">BOV_1989</name>
</gene>
<protein>
    <recommendedName>
        <fullName evidence="1">Shikimate dehydrogenase (NADP(+))</fullName>
        <shortName evidence="1">SDH</shortName>
        <ecNumber evidence="1">1.1.1.25</ecNumber>
    </recommendedName>
</protein>
<comment type="function">
    <text evidence="1">Involved in the biosynthesis of the chorismate, which leads to the biosynthesis of aromatic amino acids. Catalyzes the reversible NADPH linked reduction of 3-dehydroshikimate (DHSA) to yield shikimate (SA).</text>
</comment>
<comment type="catalytic activity">
    <reaction evidence="1">
        <text>shikimate + NADP(+) = 3-dehydroshikimate + NADPH + H(+)</text>
        <dbReference type="Rhea" id="RHEA:17737"/>
        <dbReference type="ChEBI" id="CHEBI:15378"/>
        <dbReference type="ChEBI" id="CHEBI:16630"/>
        <dbReference type="ChEBI" id="CHEBI:36208"/>
        <dbReference type="ChEBI" id="CHEBI:57783"/>
        <dbReference type="ChEBI" id="CHEBI:58349"/>
        <dbReference type="EC" id="1.1.1.25"/>
    </reaction>
</comment>
<comment type="pathway">
    <text evidence="1">Metabolic intermediate biosynthesis; chorismate biosynthesis; chorismate from D-erythrose 4-phosphate and phosphoenolpyruvate: step 4/7.</text>
</comment>
<comment type="subunit">
    <text evidence="1">Homodimer.</text>
</comment>
<comment type="similarity">
    <text evidence="1">Belongs to the shikimate dehydrogenase family.</text>
</comment>
<reference key="1">
    <citation type="journal article" date="2009" name="PLoS ONE">
        <title>Genome degradation in Brucella ovis corresponds with narrowing of its host range and tissue tropism.</title>
        <authorList>
            <person name="Tsolis R.M."/>
            <person name="Seshadri R."/>
            <person name="Santos R.L."/>
            <person name="Sangari F.J."/>
            <person name="Lobo J.M."/>
            <person name="de Jong M.F."/>
            <person name="Ren Q."/>
            <person name="Myers G."/>
            <person name="Brinkac L.M."/>
            <person name="Nelson W.C."/>
            <person name="Deboy R.T."/>
            <person name="Angiuoli S."/>
            <person name="Khouri H."/>
            <person name="Dimitrov G."/>
            <person name="Robinson J.R."/>
            <person name="Mulligan S."/>
            <person name="Walker R.L."/>
            <person name="Elzer P.E."/>
            <person name="Hassan K.A."/>
            <person name="Paulsen I.T."/>
        </authorList>
    </citation>
    <scope>NUCLEOTIDE SEQUENCE [LARGE SCALE GENOMIC DNA]</scope>
    <source>
        <strain>ATCC 25840 / 63/290 / NCTC 10512</strain>
    </source>
</reference>
<accession>A5VT27</accession>
<organism>
    <name type="scientific">Brucella ovis (strain ATCC 25840 / 63/290 / NCTC 10512)</name>
    <dbReference type="NCBI Taxonomy" id="444178"/>
    <lineage>
        <taxon>Bacteria</taxon>
        <taxon>Pseudomonadati</taxon>
        <taxon>Pseudomonadota</taxon>
        <taxon>Alphaproteobacteria</taxon>
        <taxon>Hyphomicrobiales</taxon>
        <taxon>Brucellaceae</taxon>
        <taxon>Brucella/Ochrobactrum group</taxon>
        <taxon>Brucella</taxon>
    </lineage>
</organism>
<keyword id="KW-0028">Amino-acid biosynthesis</keyword>
<keyword id="KW-0057">Aromatic amino acid biosynthesis</keyword>
<keyword id="KW-0521">NADP</keyword>
<keyword id="KW-0560">Oxidoreductase</keyword>
<dbReference type="EC" id="1.1.1.25" evidence="1"/>
<dbReference type="EMBL" id="CP000708">
    <property type="protein sequence ID" value="ABQ61554.1"/>
    <property type="molecule type" value="Genomic_DNA"/>
</dbReference>
<dbReference type="RefSeq" id="WP_011950349.1">
    <property type="nucleotide sequence ID" value="NC_009505.1"/>
</dbReference>
<dbReference type="SMR" id="A5VT27"/>
<dbReference type="GeneID" id="45125323"/>
<dbReference type="KEGG" id="bov:BOV_1989"/>
<dbReference type="HOGENOM" id="CLU_044063_2_0_5"/>
<dbReference type="PhylomeDB" id="A5VT27"/>
<dbReference type="UniPathway" id="UPA00053">
    <property type="reaction ID" value="UER00087"/>
</dbReference>
<dbReference type="Proteomes" id="UP000006383">
    <property type="component" value="Chromosome I"/>
</dbReference>
<dbReference type="GO" id="GO:0005829">
    <property type="term" value="C:cytosol"/>
    <property type="evidence" value="ECO:0007669"/>
    <property type="project" value="TreeGrafter"/>
</dbReference>
<dbReference type="GO" id="GO:0050661">
    <property type="term" value="F:NADP binding"/>
    <property type="evidence" value="ECO:0007669"/>
    <property type="project" value="InterPro"/>
</dbReference>
<dbReference type="GO" id="GO:0004764">
    <property type="term" value="F:shikimate 3-dehydrogenase (NADP+) activity"/>
    <property type="evidence" value="ECO:0007669"/>
    <property type="project" value="UniProtKB-UniRule"/>
</dbReference>
<dbReference type="GO" id="GO:0008652">
    <property type="term" value="P:amino acid biosynthetic process"/>
    <property type="evidence" value="ECO:0007669"/>
    <property type="project" value="UniProtKB-KW"/>
</dbReference>
<dbReference type="GO" id="GO:0009073">
    <property type="term" value="P:aromatic amino acid family biosynthetic process"/>
    <property type="evidence" value="ECO:0007669"/>
    <property type="project" value="UniProtKB-KW"/>
</dbReference>
<dbReference type="GO" id="GO:0009423">
    <property type="term" value="P:chorismate biosynthetic process"/>
    <property type="evidence" value="ECO:0007669"/>
    <property type="project" value="UniProtKB-UniRule"/>
</dbReference>
<dbReference type="GO" id="GO:0019632">
    <property type="term" value="P:shikimate metabolic process"/>
    <property type="evidence" value="ECO:0007669"/>
    <property type="project" value="InterPro"/>
</dbReference>
<dbReference type="CDD" id="cd01065">
    <property type="entry name" value="NAD_bind_Shikimate_DH"/>
    <property type="match status" value="1"/>
</dbReference>
<dbReference type="Gene3D" id="3.40.50.10860">
    <property type="entry name" value="Leucine Dehydrogenase, chain A, domain 1"/>
    <property type="match status" value="1"/>
</dbReference>
<dbReference type="Gene3D" id="3.40.50.720">
    <property type="entry name" value="NAD(P)-binding Rossmann-like Domain"/>
    <property type="match status" value="1"/>
</dbReference>
<dbReference type="HAMAP" id="MF_00222">
    <property type="entry name" value="Shikimate_DH_AroE"/>
    <property type="match status" value="1"/>
</dbReference>
<dbReference type="InterPro" id="IPR046346">
    <property type="entry name" value="Aminoacid_DH-like_N_sf"/>
</dbReference>
<dbReference type="InterPro" id="IPR036291">
    <property type="entry name" value="NAD(P)-bd_dom_sf"/>
</dbReference>
<dbReference type="InterPro" id="IPR041121">
    <property type="entry name" value="SDH_C"/>
</dbReference>
<dbReference type="InterPro" id="IPR011342">
    <property type="entry name" value="Shikimate_DH"/>
</dbReference>
<dbReference type="InterPro" id="IPR013708">
    <property type="entry name" value="Shikimate_DH-bd_N"/>
</dbReference>
<dbReference type="InterPro" id="IPR022893">
    <property type="entry name" value="Shikimate_DH_fam"/>
</dbReference>
<dbReference type="InterPro" id="IPR006151">
    <property type="entry name" value="Shikm_DH/Glu-tRNA_Rdtase"/>
</dbReference>
<dbReference type="NCBIfam" id="TIGR00507">
    <property type="entry name" value="aroE"/>
    <property type="match status" value="1"/>
</dbReference>
<dbReference type="NCBIfam" id="NF001312">
    <property type="entry name" value="PRK00258.1-4"/>
    <property type="match status" value="1"/>
</dbReference>
<dbReference type="PANTHER" id="PTHR21089:SF1">
    <property type="entry name" value="BIFUNCTIONAL 3-DEHYDROQUINATE DEHYDRATASE_SHIKIMATE DEHYDROGENASE, CHLOROPLASTIC"/>
    <property type="match status" value="1"/>
</dbReference>
<dbReference type="PANTHER" id="PTHR21089">
    <property type="entry name" value="SHIKIMATE DEHYDROGENASE"/>
    <property type="match status" value="1"/>
</dbReference>
<dbReference type="Pfam" id="PF18317">
    <property type="entry name" value="SDH_C"/>
    <property type="match status" value="1"/>
</dbReference>
<dbReference type="Pfam" id="PF01488">
    <property type="entry name" value="Shikimate_DH"/>
    <property type="match status" value="1"/>
</dbReference>
<dbReference type="Pfam" id="PF08501">
    <property type="entry name" value="Shikimate_dh_N"/>
    <property type="match status" value="1"/>
</dbReference>
<dbReference type="SUPFAM" id="SSF53223">
    <property type="entry name" value="Aminoacid dehydrogenase-like, N-terminal domain"/>
    <property type="match status" value="1"/>
</dbReference>
<dbReference type="SUPFAM" id="SSF51735">
    <property type="entry name" value="NAD(P)-binding Rossmann-fold domains"/>
    <property type="match status" value="1"/>
</dbReference>
<feature type="chain" id="PRO_1000021268" description="Shikimate dehydrogenase (NADP(+))">
    <location>
        <begin position="1"/>
        <end position="289"/>
    </location>
</feature>
<feature type="active site" description="Proton acceptor" evidence="1">
    <location>
        <position position="73"/>
    </location>
</feature>
<feature type="binding site" evidence="1">
    <location>
        <begin position="22"/>
        <end position="24"/>
    </location>
    <ligand>
        <name>shikimate</name>
        <dbReference type="ChEBI" id="CHEBI:36208"/>
    </ligand>
</feature>
<feature type="binding site" evidence="1">
    <location>
        <position position="69"/>
    </location>
    <ligand>
        <name>shikimate</name>
        <dbReference type="ChEBI" id="CHEBI:36208"/>
    </ligand>
</feature>
<feature type="binding site" evidence="1">
    <location>
        <position position="85"/>
    </location>
    <ligand>
        <name>NADP(+)</name>
        <dbReference type="ChEBI" id="CHEBI:58349"/>
    </ligand>
</feature>
<feature type="binding site" evidence="1">
    <location>
        <position position="94"/>
    </location>
    <ligand>
        <name>shikimate</name>
        <dbReference type="ChEBI" id="CHEBI:36208"/>
    </ligand>
</feature>
<feature type="binding site" evidence="1">
    <location>
        <position position="109"/>
    </location>
    <ligand>
        <name>shikimate</name>
        <dbReference type="ChEBI" id="CHEBI:36208"/>
    </ligand>
</feature>
<feature type="binding site" evidence="1">
    <location>
        <begin position="134"/>
        <end position="138"/>
    </location>
    <ligand>
        <name>NADP(+)</name>
        <dbReference type="ChEBI" id="CHEBI:58349"/>
    </ligand>
</feature>
<feature type="binding site" evidence="1">
    <location>
        <begin position="158"/>
        <end position="163"/>
    </location>
    <ligand>
        <name>NADP(+)</name>
        <dbReference type="ChEBI" id="CHEBI:58349"/>
    </ligand>
</feature>
<feature type="binding site" evidence="1">
    <location>
        <position position="226"/>
    </location>
    <ligand>
        <name>NADP(+)</name>
        <dbReference type="ChEBI" id="CHEBI:58349"/>
    </ligand>
</feature>
<feature type="binding site" evidence="1">
    <location>
        <position position="228"/>
    </location>
    <ligand>
        <name>shikimate</name>
        <dbReference type="ChEBI" id="CHEBI:36208"/>
    </ligand>
</feature>
<feature type="binding site" evidence="1">
    <location>
        <position position="249"/>
    </location>
    <ligand>
        <name>NADP(+)</name>
        <dbReference type="ChEBI" id="CHEBI:58349"/>
    </ligand>
</feature>
<proteinExistence type="inferred from homology"/>